<keyword id="KW-1185">Reference proteome</keyword>
<keyword id="KW-0687">Ribonucleoprotein</keyword>
<keyword id="KW-0689">Ribosomal protein</keyword>
<keyword id="KW-0694">RNA-binding</keyword>
<keyword id="KW-0699">rRNA-binding</keyword>
<name>RL15_POLAQ</name>
<feature type="chain" id="PRO_1000086722" description="Large ribosomal subunit protein uL15">
    <location>
        <begin position="1"/>
        <end position="146"/>
    </location>
</feature>
<feature type="region of interest" description="Disordered" evidence="2">
    <location>
        <begin position="1"/>
        <end position="51"/>
    </location>
</feature>
<feature type="compositionally biased region" description="Gly residues" evidence="2">
    <location>
        <begin position="21"/>
        <end position="31"/>
    </location>
</feature>
<organism>
    <name type="scientific">Polynucleobacter asymbioticus (strain DSM 18221 / CIP 109841 / QLW-P1DMWA-1)</name>
    <name type="common">Polynucleobacter necessarius subsp. asymbioticus</name>
    <dbReference type="NCBI Taxonomy" id="312153"/>
    <lineage>
        <taxon>Bacteria</taxon>
        <taxon>Pseudomonadati</taxon>
        <taxon>Pseudomonadota</taxon>
        <taxon>Betaproteobacteria</taxon>
        <taxon>Burkholderiales</taxon>
        <taxon>Burkholderiaceae</taxon>
        <taxon>Polynucleobacter</taxon>
    </lineage>
</organism>
<comment type="function">
    <text evidence="1">Binds to the 23S rRNA.</text>
</comment>
<comment type="subunit">
    <text evidence="1">Part of the 50S ribosomal subunit.</text>
</comment>
<comment type="similarity">
    <text evidence="1">Belongs to the universal ribosomal protein uL15 family.</text>
</comment>
<evidence type="ECO:0000255" key="1">
    <source>
        <dbReference type="HAMAP-Rule" id="MF_01341"/>
    </source>
</evidence>
<evidence type="ECO:0000256" key="2">
    <source>
        <dbReference type="SAM" id="MobiDB-lite"/>
    </source>
</evidence>
<evidence type="ECO:0000305" key="3"/>
<sequence length="146" mass="15449">MQLNTLKPAEGSKKNRRRVGRGIGSGLGKTAGRGHKGQKSRSGGFHKVGFEGGQMPMYRRLPKRGFVSMTRRHVGQITLNDLAKINLPEVDLLVLKAHGFAGEQINAVKVIKTGELKIAVTLKGLTATAGAKAAIEAAGGKLVELA</sequence>
<gene>
    <name evidence="1" type="primary">rplO</name>
    <name type="ordered locus">Pnuc_0072</name>
</gene>
<proteinExistence type="inferred from homology"/>
<accession>A4SUY0</accession>
<dbReference type="EMBL" id="CP000655">
    <property type="protein sequence ID" value="ABP33294.1"/>
    <property type="molecule type" value="Genomic_DNA"/>
</dbReference>
<dbReference type="RefSeq" id="WP_011901919.1">
    <property type="nucleotide sequence ID" value="NC_009379.1"/>
</dbReference>
<dbReference type="SMR" id="A4SUY0"/>
<dbReference type="GeneID" id="31480418"/>
<dbReference type="KEGG" id="pnu:Pnuc_0072"/>
<dbReference type="eggNOG" id="COG0200">
    <property type="taxonomic scope" value="Bacteria"/>
</dbReference>
<dbReference type="HOGENOM" id="CLU_055188_4_2_4"/>
<dbReference type="Proteomes" id="UP000000231">
    <property type="component" value="Chromosome"/>
</dbReference>
<dbReference type="GO" id="GO:0022625">
    <property type="term" value="C:cytosolic large ribosomal subunit"/>
    <property type="evidence" value="ECO:0007669"/>
    <property type="project" value="TreeGrafter"/>
</dbReference>
<dbReference type="GO" id="GO:0019843">
    <property type="term" value="F:rRNA binding"/>
    <property type="evidence" value="ECO:0007669"/>
    <property type="project" value="UniProtKB-UniRule"/>
</dbReference>
<dbReference type="GO" id="GO:0003735">
    <property type="term" value="F:structural constituent of ribosome"/>
    <property type="evidence" value="ECO:0007669"/>
    <property type="project" value="InterPro"/>
</dbReference>
<dbReference type="GO" id="GO:0006412">
    <property type="term" value="P:translation"/>
    <property type="evidence" value="ECO:0007669"/>
    <property type="project" value="UniProtKB-UniRule"/>
</dbReference>
<dbReference type="Gene3D" id="3.100.10.10">
    <property type="match status" value="1"/>
</dbReference>
<dbReference type="HAMAP" id="MF_01341">
    <property type="entry name" value="Ribosomal_uL15"/>
    <property type="match status" value="1"/>
</dbReference>
<dbReference type="InterPro" id="IPR030878">
    <property type="entry name" value="Ribosomal_uL15"/>
</dbReference>
<dbReference type="InterPro" id="IPR021131">
    <property type="entry name" value="Ribosomal_uL15/eL18"/>
</dbReference>
<dbReference type="InterPro" id="IPR036227">
    <property type="entry name" value="Ribosomal_uL15/eL18_sf"/>
</dbReference>
<dbReference type="InterPro" id="IPR005749">
    <property type="entry name" value="Ribosomal_uL15_bac-type"/>
</dbReference>
<dbReference type="NCBIfam" id="TIGR01071">
    <property type="entry name" value="rplO_bact"/>
    <property type="match status" value="1"/>
</dbReference>
<dbReference type="PANTHER" id="PTHR12934">
    <property type="entry name" value="50S RIBOSOMAL PROTEIN L15"/>
    <property type="match status" value="1"/>
</dbReference>
<dbReference type="PANTHER" id="PTHR12934:SF11">
    <property type="entry name" value="LARGE RIBOSOMAL SUBUNIT PROTEIN UL15M"/>
    <property type="match status" value="1"/>
</dbReference>
<dbReference type="Pfam" id="PF00828">
    <property type="entry name" value="Ribosomal_L27A"/>
    <property type="match status" value="1"/>
</dbReference>
<dbReference type="SUPFAM" id="SSF52080">
    <property type="entry name" value="Ribosomal proteins L15p and L18e"/>
    <property type="match status" value="1"/>
</dbReference>
<protein>
    <recommendedName>
        <fullName evidence="1">Large ribosomal subunit protein uL15</fullName>
    </recommendedName>
    <alternativeName>
        <fullName evidence="3">50S ribosomal protein L15</fullName>
    </alternativeName>
</protein>
<reference key="1">
    <citation type="journal article" date="2012" name="Stand. Genomic Sci.">
        <title>Complete genome sequence of Polynucleobacter necessarius subsp. asymbioticus type strain (QLW-P1DMWA-1(T)).</title>
        <authorList>
            <person name="Meincke L."/>
            <person name="Copeland A."/>
            <person name="Lapidus A."/>
            <person name="Lucas S."/>
            <person name="Berry K.W."/>
            <person name="Del Rio T.G."/>
            <person name="Hammon N."/>
            <person name="Dalin E."/>
            <person name="Tice H."/>
            <person name="Pitluck S."/>
            <person name="Richardson P."/>
            <person name="Bruce D."/>
            <person name="Goodwin L."/>
            <person name="Han C."/>
            <person name="Tapia R."/>
            <person name="Detter J.C."/>
            <person name="Schmutz J."/>
            <person name="Brettin T."/>
            <person name="Larimer F."/>
            <person name="Land M."/>
            <person name="Hauser L."/>
            <person name="Kyrpides N.C."/>
            <person name="Ivanova N."/>
            <person name="Goker M."/>
            <person name="Woyke T."/>
            <person name="Wu Q.L."/>
            <person name="Pockl M."/>
            <person name="Hahn M.W."/>
            <person name="Klenk H.P."/>
        </authorList>
    </citation>
    <scope>NUCLEOTIDE SEQUENCE [LARGE SCALE GENOMIC DNA]</scope>
    <source>
        <strain>DSM 18221 / CIP 109841 / QLW-P1DMWA-1</strain>
    </source>
</reference>